<name>ISPG_PECAS</name>
<dbReference type="EC" id="1.17.7.3" evidence="1"/>
<dbReference type="EMBL" id="BX950851">
    <property type="protein sequence ID" value="CAG76118.1"/>
    <property type="molecule type" value="Genomic_DNA"/>
</dbReference>
<dbReference type="RefSeq" id="WP_011094741.1">
    <property type="nucleotide sequence ID" value="NC_004547.2"/>
</dbReference>
<dbReference type="SMR" id="Q6D276"/>
<dbReference type="STRING" id="218491.ECA3220"/>
<dbReference type="GeneID" id="57209904"/>
<dbReference type="KEGG" id="eca:ECA3220"/>
<dbReference type="PATRIC" id="fig|218491.5.peg.3262"/>
<dbReference type="eggNOG" id="COG0821">
    <property type="taxonomic scope" value="Bacteria"/>
</dbReference>
<dbReference type="HOGENOM" id="CLU_042258_0_0_6"/>
<dbReference type="OrthoDB" id="9803214at2"/>
<dbReference type="UniPathway" id="UPA00056">
    <property type="reaction ID" value="UER00096"/>
</dbReference>
<dbReference type="Proteomes" id="UP000007966">
    <property type="component" value="Chromosome"/>
</dbReference>
<dbReference type="GO" id="GO:0051539">
    <property type="term" value="F:4 iron, 4 sulfur cluster binding"/>
    <property type="evidence" value="ECO:0007669"/>
    <property type="project" value="UniProtKB-UniRule"/>
</dbReference>
<dbReference type="GO" id="GO:0046429">
    <property type="term" value="F:4-hydroxy-3-methylbut-2-en-1-yl diphosphate synthase activity (ferredoxin)"/>
    <property type="evidence" value="ECO:0007669"/>
    <property type="project" value="UniProtKB-UniRule"/>
</dbReference>
<dbReference type="GO" id="GO:0141197">
    <property type="term" value="F:4-hydroxy-3-methylbut-2-enyl-diphosphate synthase activity (flavodoxin)"/>
    <property type="evidence" value="ECO:0007669"/>
    <property type="project" value="UniProtKB-EC"/>
</dbReference>
<dbReference type="GO" id="GO:0005506">
    <property type="term" value="F:iron ion binding"/>
    <property type="evidence" value="ECO:0007669"/>
    <property type="project" value="InterPro"/>
</dbReference>
<dbReference type="GO" id="GO:0019288">
    <property type="term" value="P:isopentenyl diphosphate biosynthetic process, methylerythritol 4-phosphate pathway"/>
    <property type="evidence" value="ECO:0007669"/>
    <property type="project" value="UniProtKB-UniRule"/>
</dbReference>
<dbReference type="GO" id="GO:0016114">
    <property type="term" value="P:terpenoid biosynthetic process"/>
    <property type="evidence" value="ECO:0007669"/>
    <property type="project" value="InterPro"/>
</dbReference>
<dbReference type="FunFam" id="3.20.20.20:FF:000001">
    <property type="entry name" value="4-hydroxy-3-methylbut-2-en-1-yl diphosphate synthase (flavodoxin)"/>
    <property type="match status" value="1"/>
</dbReference>
<dbReference type="FunFam" id="3.30.413.10:FF:000002">
    <property type="entry name" value="4-hydroxy-3-methylbut-2-en-1-yl diphosphate synthase (flavodoxin)"/>
    <property type="match status" value="1"/>
</dbReference>
<dbReference type="Gene3D" id="3.20.20.20">
    <property type="entry name" value="Dihydropteroate synthase-like"/>
    <property type="match status" value="1"/>
</dbReference>
<dbReference type="Gene3D" id="3.30.413.10">
    <property type="entry name" value="Sulfite Reductase Hemoprotein, domain 1"/>
    <property type="match status" value="1"/>
</dbReference>
<dbReference type="HAMAP" id="MF_00159">
    <property type="entry name" value="IspG"/>
    <property type="match status" value="1"/>
</dbReference>
<dbReference type="InterPro" id="IPR011005">
    <property type="entry name" value="Dihydropteroate_synth-like_sf"/>
</dbReference>
<dbReference type="InterPro" id="IPR036849">
    <property type="entry name" value="Enolase-like_C_sf"/>
</dbReference>
<dbReference type="InterPro" id="IPR016425">
    <property type="entry name" value="IspG_bac"/>
</dbReference>
<dbReference type="InterPro" id="IPR004588">
    <property type="entry name" value="IspG_bac-typ"/>
</dbReference>
<dbReference type="InterPro" id="IPR045854">
    <property type="entry name" value="NO2/SO3_Rdtase_4Fe4S_sf"/>
</dbReference>
<dbReference type="NCBIfam" id="TIGR00612">
    <property type="entry name" value="ispG_gcpE"/>
    <property type="match status" value="1"/>
</dbReference>
<dbReference type="NCBIfam" id="NF001540">
    <property type="entry name" value="PRK00366.1"/>
    <property type="match status" value="1"/>
</dbReference>
<dbReference type="PANTHER" id="PTHR30454">
    <property type="entry name" value="4-HYDROXY-3-METHYLBUT-2-EN-1-YL DIPHOSPHATE SYNTHASE"/>
    <property type="match status" value="1"/>
</dbReference>
<dbReference type="PANTHER" id="PTHR30454:SF0">
    <property type="entry name" value="4-HYDROXY-3-METHYLBUT-2-EN-1-YL DIPHOSPHATE SYNTHASE (FERREDOXIN), CHLOROPLASTIC"/>
    <property type="match status" value="1"/>
</dbReference>
<dbReference type="Pfam" id="PF04551">
    <property type="entry name" value="GcpE"/>
    <property type="match status" value="1"/>
</dbReference>
<dbReference type="PIRSF" id="PIRSF004640">
    <property type="entry name" value="IspG"/>
    <property type="match status" value="1"/>
</dbReference>
<dbReference type="SUPFAM" id="SSF51604">
    <property type="entry name" value="Enolase C-terminal domain-like"/>
    <property type="match status" value="1"/>
</dbReference>
<dbReference type="SUPFAM" id="SSF56014">
    <property type="entry name" value="Nitrite and sulphite reductase 4Fe-4S domain-like"/>
    <property type="match status" value="1"/>
</dbReference>
<protein>
    <recommendedName>
        <fullName evidence="1">4-hydroxy-3-methylbut-2-en-1-yl diphosphate synthase (flavodoxin)</fullName>
        <ecNumber evidence="1">1.17.7.3</ecNumber>
    </recommendedName>
    <alternativeName>
        <fullName evidence="1">1-hydroxy-2-methyl-2-(E)-butenyl 4-diphosphate synthase</fullName>
    </alternativeName>
</protein>
<feature type="chain" id="PRO_0000190577" description="4-hydroxy-3-methylbut-2-en-1-yl diphosphate synthase (flavodoxin)">
    <location>
        <begin position="1"/>
        <end position="373"/>
    </location>
</feature>
<feature type="binding site" evidence="1">
    <location>
        <position position="270"/>
    </location>
    <ligand>
        <name>[4Fe-4S] cluster</name>
        <dbReference type="ChEBI" id="CHEBI:49883"/>
    </ligand>
</feature>
<feature type="binding site" evidence="1">
    <location>
        <position position="273"/>
    </location>
    <ligand>
        <name>[4Fe-4S] cluster</name>
        <dbReference type="ChEBI" id="CHEBI:49883"/>
    </ligand>
</feature>
<feature type="binding site" evidence="1">
    <location>
        <position position="305"/>
    </location>
    <ligand>
        <name>[4Fe-4S] cluster</name>
        <dbReference type="ChEBI" id="CHEBI:49883"/>
    </ligand>
</feature>
<feature type="binding site" evidence="1">
    <location>
        <position position="312"/>
    </location>
    <ligand>
        <name>[4Fe-4S] cluster</name>
        <dbReference type="ChEBI" id="CHEBI:49883"/>
    </ligand>
</feature>
<keyword id="KW-0004">4Fe-4S</keyword>
<keyword id="KW-0408">Iron</keyword>
<keyword id="KW-0411">Iron-sulfur</keyword>
<keyword id="KW-0414">Isoprene biosynthesis</keyword>
<keyword id="KW-0479">Metal-binding</keyword>
<keyword id="KW-0560">Oxidoreductase</keyword>
<keyword id="KW-1185">Reference proteome</keyword>
<sequence>MHNAAPITRRKSTRIYVGKVPVGDGAPIAVQSMTNTRTTDVEATVNQIKALERVGVDIVRVSVPTMDAAEAFKLIKQQVNVPLVADIHFDYRIALKVAEYGVDCLRINPGNIGNEERIRSVVDCARYYNIPIRIGVNGGSLEKDIQEKYGEPTPEALLESAMRHVDILDRLNFDQFKVSVKASDVFLAVQSYRLLAARIDQPLHLGITEAGGARSGAVKSAIGLGLLLSEGIGDTLRISLAADPVEEVKVGFDILKSLRIRARGINFIACPTCSRQEFDVIGTVNALEQRLEDLITPMDVSIIGCVVNGPGEALVSTIGVTGGHNKSGFYEDGVRQRERFDNEQMIDQLEAKIRAKASMMDESQRITVNLVDK</sequence>
<proteinExistence type="inferred from homology"/>
<gene>
    <name evidence="1" type="primary">ispG</name>
    <name type="synonym">gcpE</name>
    <name type="ordered locus">ECA3220</name>
</gene>
<reference key="1">
    <citation type="journal article" date="2004" name="Proc. Natl. Acad. Sci. U.S.A.">
        <title>Genome sequence of the enterobacterial phytopathogen Erwinia carotovora subsp. atroseptica and characterization of virulence factors.</title>
        <authorList>
            <person name="Bell K.S."/>
            <person name="Sebaihia M."/>
            <person name="Pritchard L."/>
            <person name="Holden M.T.G."/>
            <person name="Hyman L.J."/>
            <person name="Holeva M.C."/>
            <person name="Thomson N.R."/>
            <person name="Bentley S.D."/>
            <person name="Churcher L.J.C."/>
            <person name="Mungall K."/>
            <person name="Atkin R."/>
            <person name="Bason N."/>
            <person name="Brooks K."/>
            <person name="Chillingworth T."/>
            <person name="Clark K."/>
            <person name="Doggett J."/>
            <person name="Fraser A."/>
            <person name="Hance Z."/>
            <person name="Hauser H."/>
            <person name="Jagels K."/>
            <person name="Moule S."/>
            <person name="Norbertczak H."/>
            <person name="Ormond D."/>
            <person name="Price C."/>
            <person name="Quail M.A."/>
            <person name="Sanders M."/>
            <person name="Walker D."/>
            <person name="Whitehead S."/>
            <person name="Salmond G.P.C."/>
            <person name="Birch P.R.J."/>
            <person name="Parkhill J."/>
            <person name="Toth I.K."/>
        </authorList>
    </citation>
    <scope>NUCLEOTIDE SEQUENCE [LARGE SCALE GENOMIC DNA]</scope>
    <source>
        <strain>SCRI 1043 / ATCC BAA-672</strain>
    </source>
</reference>
<evidence type="ECO:0000255" key="1">
    <source>
        <dbReference type="HAMAP-Rule" id="MF_00159"/>
    </source>
</evidence>
<accession>Q6D276</accession>
<organism>
    <name type="scientific">Pectobacterium atrosepticum (strain SCRI 1043 / ATCC BAA-672)</name>
    <name type="common">Erwinia carotovora subsp. atroseptica</name>
    <dbReference type="NCBI Taxonomy" id="218491"/>
    <lineage>
        <taxon>Bacteria</taxon>
        <taxon>Pseudomonadati</taxon>
        <taxon>Pseudomonadota</taxon>
        <taxon>Gammaproteobacteria</taxon>
        <taxon>Enterobacterales</taxon>
        <taxon>Pectobacteriaceae</taxon>
        <taxon>Pectobacterium</taxon>
    </lineage>
</organism>
<comment type="function">
    <text evidence="1">Converts 2C-methyl-D-erythritol 2,4-cyclodiphosphate (ME-2,4cPP) into 1-hydroxy-2-methyl-2-(E)-butenyl 4-diphosphate.</text>
</comment>
<comment type="catalytic activity">
    <reaction evidence="1">
        <text>(2E)-4-hydroxy-3-methylbut-2-enyl diphosphate + oxidized [flavodoxin] + H2O + 2 H(+) = 2-C-methyl-D-erythritol 2,4-cyclic diphosphate + reduced [flavodoxin]</text>
        <dbReference type="Rhea" id="RHEA:43604"/>
        <dbReference type="Rhea" id="RHEA-COMP:10622"/>
        <dbReference type="Rhea" id="RHEA-COMP:10623"/>
        <dbReference type="ChEBI" id="CHEBI:15377"/>
        <dbReference type="ChEBI" id="CHEBI:15378"/>
        <dbReference type="ChEBI" id="CHEBI:57618"/>
        <dbReference type="ChEBI" id="CHEBI:58210"/>
        <dbReference type="ChEBI" id="CHEBI:58483"/>
        <dbReference type="ChEBI" id="CHEBI:128753"/>
        <dbReference type="EC" id="1.17.7.3"/>
    </reaction>
</comment>
<comment type="cofactor">
    <cofactor evidence="1">
        <name>[4Fe-4S] cluster</name>
        <dbReference type="ChEBI" id="CHEBI:49883"/>
    </cofactor>
    <text evidence="1">Binds 1 [4Fe-4S] cluster.</text>
</comment>
<comment type="pathway">
    <text evidence="1">Isoprenoid biosynthesis; isopentenyl diphosphate biosynthesis via DXP pathway; isopentenyl diphosphate from 1-deoxy-D-xylulose 5-phosphate: step 5/6.</text>
</comment>
<comment type="similarity">
    <text evidence="1">Belongs to the IspG family.</text>
</comment>